<evidence type="ECO:0000255" key="1">
    <source>
        <dbReference type="HAMAP-Rule" id="MF_00113"/>
    </source>
</evidence>
<sequence>MDINLFDFHLPEELIAQVPLEERETSRLMVLDRETGDIEHKHFTDILSYLHEGDCLVLNETKVMPARLHGVKEDTGAHIEVLLLKQEEGDKWETLVKPAKRVKEGTVISFGEGKLKATCTGTADQGGRQLEFSYDGIFYEILDELGEMPLPPYIKETLEDRDRYQTVYAKEIGSAAAPTAGLHFTEELLEKLKQKGVELAFITLHVGLGTFRPVSADTIEEHHMHAEYYHMSEETAALLNRVKENGGRIITVGTTSTRTLETIATDHDGKLCAASGWTDIFMYPGYEFKAIDGLITNFHLPKSTLIMLVSAFANRDNVLHAYNEAVKEKYRFFSFGDAMFVASHAKMGNK</sequence>
<keyword id="KW-0963">Cytoplasm</keyword>
<keyword id="KW-0671">Queuosine biosynthesis</keyword>
<keyword id="KW-0949">S-adenosyl-L-methionine</keyword>
<keyword id="KW-0808">Transferase</keyword>
<dbReference type="EC" id="2.4.99.17" evidence="1"/>
<dbReference type="EMBL" id="CP001177">
    <property type="protein sequence ID" value="ACJ78031.1"/>
    <property type="molecule type" value="Genomic_DNA"/>
</dbReference>
<dbReference type="SMR" id="B7HQH7"/>
<dbReference type="KEGG" id="bcr:BCAH187_A4552"/>
<dbReference type="HOGENOM" id="CLU_039110_1_0_9"/>
<dbReference type="UniPathway" id="UPA00392"/>
<dbReference type="Proteomes" id="UP000002214">
    <property type="component" value="Chromosome"/>
</dbReference>
<dbReference type="GO" id="GO:0005737">
    <property type="term" value="C:cytoplasm"/>
    <property type="evidence" value="ECO:0007669"/>
    <property type="project" value="UniProtKB-SubCell"/>
</dbReference>
<dbReference type="GO" id="GO:0051075">
    <property type="term" value="F:S-adenosylmethionine:tRNA ribosyltransferase-isomerase activity"/>
    <property type="evidence" value="ECO:0007669"/>
    <property type="project" value="UniProtKB-EC"/>
</dbReference>
<dbReference type="GO" id="GO:0008616">
    <property type="term" value="P:queuosine biosynthetic process"/>
    <property type="evidence" value="ECO:0007669"/>
    <property type="project" value="UniProtKB-UniRule"/>
</dbReference>
<dbReference type="GO" id="GO:0002099">
    <property type="term" value="P:tRNA wobble guanine modification"/>
    <property type="evidence" value="ECO:0007669"/>
    <property type="project" value="TreeGrafter"/>
</dbReference>
<dbReference type="FunFam" id="2.40.10.240:FF:000002">
    <property type="entry name" value="S-adenosylmethionine:tRNA ribosyltransferase-isomerase"/>
    <property type="match status" value="1"/>
</dbReference>
<dbReference type="FunFam" id="3.40.1780.10:FF:000001">
    <property type="entry name" value="S-adenosylmethionine:tRNA ribosyltransferase-isomerase"/>
    <property type="match status" value="1"/>
</dbReference>
<dbReference type="Gene3D" id="2.40.10.240">
    <property type="entry name" value="QueA-like"/>
    <property type="match status" value="1"/>
</dbReference>
<dbReference type="Gene3D" id="3.40.1780.10">
    <property type="entry name" value="QueA-like"/>
    <property type="match status" value="1"/>
</dbReference>
<dbReference type="HAMAP" id="MF_00113">
    <property type="entry name" value="QueA"/>
    <property type="match status" value="1"/>
</dbReference>
<dbReference type="InterPro" id="IPR003699">
    <property type="entry name" value="QueA"/>
</dbReference>
<dbReference type="InterPro" id="IPR042118">
    <property type="entry name" value="QueA_dom1"/>
</dbReference>
<dbReference type="InterPro" id="IPR042119">
    <property type="entry name" value="QueA_dom2"/>
</dbReference>
<dbReference type="InterPro" id="IPR036100">
    <property type="entry name" value="QueA_sf"/>
</dbReference>
<dbReference type="NCBIfam" id="NF001140">
    <property type="entry name" value="PRK00147.1"/>
    <property type="match status" value="1"/>
</dbReference>
<dbReference type="NCBIfam" id="TIGR00113">
    <property type="entry name" value="queA"/>
    <property type="match status" value="1"/>
</dbReference>
<dbReference type="PANTHER" id="PTHR30307">
    <property type="entry name" value="S-ADENOSYLMETHIONINE:TRNA RIBOSYLTRANSFERASE-ISOMERASE"/>
    <property type="match status" value="1"/>
</dbReference>
<dbReference type="PANTHER" id="PTHR30307:SF0">
    <property type="entry name" value="S-ADENOSYLMETHIONINE:TRNA RIBOSYLTRANSFERASE-ISOMERASE"/>
    <property type="match status" value="1"/>
</dbReference>
<dbReference type="Pfam" id="PF02547">
    <property type="entry name" value="Queuosine_synth"/>
    <property type="match status" value="1"/>
</dbReference>
<dbReference type="SUPFAM" id="SSF111337">
    <property type="entry name" value="QueA-like"/>
    <property type="match status" value="1"/>
</dbReference>
<proteinExistence type="inferred from homology"/>
<reference key="1">
    <citation type="submission" date="2008-10" db="EMBL/GenBank/DDBJ databases">
        <title>Genome sequence of Bacillus cereus AH187.</title>
        <authorList>
            <person name="Dodson R.J."/>
            <person name="Durkin A.S."/>
            <person name="Rosovitz M.J."/>
            <person name="Rasko D.A."/>
            <person name="Kolsto A.B."/>
            <person name="Okstad O.A."/>
            <person name="Ravel J."/>
            <person name="Sutton G."/>
        </authorList>
    </citation>
    <scope>NUCLEOTIDE SEQUENCE [LARGE SCALE GENOMIC DNA]</scope>
    <source>
        <strain>AH187</strain>
    </source>
</reference>
<organism>
    <name type="scientific">Bacillus cereus (strain AH187)</name>
    <dbReference type="NCBI Taxonomy" id="405534"/>
    <lineage>
        <taxon>Bacteria</taxon>
        <taxon>Bacillati</taxon>
        <taxon>Bacillota</taxon>
        <taxon>Bacilli</taxon>
        <taxon>Bacillales</taxon>
        <taxon>Bacillaceae</taxon>
        <taxon>Bacillus</taxon>
        <taxon>Bacillus cereus group</taxon>
    </lineage>
</organism>
<name>QUEA_BACC7</name>
<comment type="function">
    <text evidence="1">Transfers and isomerizes the ribose moiety from AdoMet to the 7-aminomethyl group of 7-deazaguanine (preQ1-tRNA) to give epoxyqueuosine (oQ-tRNA).</text>
</comment>
<comment type="catalytic activity">
    <reaction evidence="1">
        <text>7-aminomethyl-7-carbaguanosine(34) in tRNA + S-adenosyl-L-methionine = epoxyqueuosine(34) in tRNA + adenine + L-methionine + 2 H(+)</text>
        <dbReference type="Rhea" id="RHEA:32155"/>
        <dbReference type="Rhea" id="RHEA-COMP:10342"/>
        <dbReference type="Rhea" id="RHEA-COMP:18582"/>
        <dbReference type="ChEBI" id="CHEBI:15378"/>
        <dbReference type="ChEBI" id="CHEBI:16708"/>
        <dbReference type="ChEBI" id="CHEBI:57844"/>
        <dbReference type="ChEBI" id="CHEBI:59789"/>
        <dbReference type="ChEBI" id="CHEBI:82833"/>
        <dbReference type="ChEBI" id="CHEBI:194443"/>
        <dbReference type="EC" id="2.4.99.17"/>
    </reaction>
</comment>
<comment type="pathway">
    <text evidence="1">tRNA modification; tRNA-queuosine biosynthesis.</text>
</comment>
<comment type="subunit">
    <text evidence="1">Monomer.</text>
</comment>
<comment type="subcellular location">
    <subcellularLocation>
        <location evidence="1">Cytoplasm</location>
    </subcellularLocation>
</comment>
<comment type="similarity">
    <text evidence="1">Belongs to the QueA family.</text>
</comment>
<accession>B7HQH7</accession>
<gene>
    <name evidence="1" type="primary">queA</name>
    <name type="ordered locus">BCAH187_A4552</name>
</gene>
<protein>
    <recommendedName>
        <fullName evidence="1">S-adenosylmethionine:tRNA ribosyltransferase-isomerase</fullName>
        <ecNumber evidence="1">2.4.99.17</ecNumber>
    </recommendedName>
    <alternativeName>
        <fullName evidence="1">Queuosine biosynthesis protein QueA</fullName>
    </alternativeName>
</protein>
<feature type="chain" id="PRO_1000117526" description="S-adenosylmethionine:tRNA ribosyltransferase-isomerase">
    <location>
        <begin position="1"/>
        <end position="350"/>
    </location>
</feature>